<sequence>MTENIHKHRILILDFGSQYTQLVARRVRELGVYCELWAWDVTEAQIRDFNPSGIILSGGPESTTEENSPRAPQYVFEAGVPVFGVCYGMQTMAMQLGGHVEASNEREFGYAQVEVVNDSALVRGIEDALTADGKPLLDVWMSHGDKVTAIPSDFVTVASTESCPFAIMANEEKRFYGVQFHPEVTHTRQGMRMLERFVRDICQCEALWTPAKIIDDAVARIREQVGDDKVILGLSGGVDSSVTAMLLHRAIGKNLTCVFVDNGLLRLSEAEQVLDMFGDHFGLNIVHVPAEDRFLSALAGENDPEAKRKIIGRVFVEVFDEEALKLEDVKWLAQGTIYPDVIESAASATGKAHVIKSHHNVGGLPKEMKMGLVEPLKELFKDEVRKIGLELGLPYDMLYRHPFPGPGLGVRVLGEVKKEYCDLLRRADAIFIEELRKADLYDKVSQAFTVFLPVRSVGVMGDGRKYDWVVSLRAVETIDFMTAHWAHLPYDFLGRVSNRIINEVNGISRVVYDISGKPPATIEWE</sequence>
<dbReference type="EC" id="6.3.5.2" evidence="1"/>
<dbReference type="EMBL" id="CP000800">
    <property type="protein sequence ID" value="ABV19503.1"/>
    <property type="molecule type" value="Genomic_DNA"/>
</dbReference>
<dbReference type="RefSeq" id="WP_000138288.1">
    <property type="nucleotide sequence ID" value="NC_009801.1"/>
</dbReference>
<dbReference type="SMR" id="A7ZPV1"/>
<dbReference type="MEROPS" id="C26.957"/>
<dbReference type="GeneID" id="75206200"/>
<dbReference type="KEGG" id="ecw:EcE24377A_2791"/>
<dbReference type="HOGENOM" id="CLU_014340_0_5_6"/>
<dbReference type="UniPathway" id="UPA00189">
    <property type="reaction ID" value="UER00296"/>
</dbReference>
<dbReference type="Proteomes" id="UP000001122">
    <property type="component" value="Chromosome"/>
</dbReference>
<dbReference type="GO" id="GO:0005829">
    <property type="term" value="C:cytosol"/>
    <property type="evidence" value="ECO:0007669"/>
    <property type="project" value="TreeGrafter"/>
</dbReference>
<dbReference type="GO" id="GO:0005524">
    <property type="term" value="F:ATP binding"/>
    <property type="evidence" value="ECO:0007669"/>
    <property type="project" value="UniProtKB-UniRule"/>
</dbReference>
<dbReference type="GO" id="GO:0003921">
    <property type="term" value="F:GMP synthase activity"/>
    <property type="evidence" value="ECO:0007669"/>
    <property type="project" value="InterPro"/>
</dbReference>
<dbReference type="CDD" id="cd01742">
    <property type="entry name" value="GATase1_GMP_Synthase"/>
    <property type="match status" value="1"/>
</dbReference>
<dbReference type="CDD" id="cd01997">
    <property type="entry name" value="GMP_synthase_C"/>
    <property type="match status" value="1"/>
</dbReference>
<dbReference type="FunFam" id="3.30.300.10:FF:000002">
    <property type="entry name" value="GMP synthase [glutamine-hydrolyzing]"/>
    <property type="match status" value="1"/>
</dbReference>
<dbReference type="FunFam" id="3.40.50.620:FF:000001">
    <property type="entry name" value="GMP synthase [glutamine-hydrolyzing]"/>
    <property type="match status" value="1"/>
</dbReference>
<dbReference type="FunFam" id="3.40.50.880:FF:000001">
    <property type="entry name" value="GMP synthase [glutamine-hydrolyzing]"/>
    <property type="match status" value="1"/>
</dbReference>
<dbReference type="Gene3D" id="3.30.300.10">
    <property type="match status" value="1"/>
</dbReference>
<dbReference type="Gene3D" id="3.40.50.880">
    <property type="match status" value="1"/>
</dbReference>
<dbReference type="Gene3D" id="3.40.50.620">
    <property type="entry name" value="HUPs"/>
    <property type="match status" value="1"/>
</dbReference>
<dbReference type="HAMAP" id="MF_00344">
    <property type="entry name" value="GMP_synthase"/>
    <property type="match status" value="1"/>
</dbReference>
<dbReference type="InterPro" id="IPR029062">
    <property type="entry name" value="Class_I_gatase-like"/>
</dbReference>
<dbReference type="InterPro" id="IPR017926">
    <property type="entry name" value="GATASE"/>
</dbReference>
<dbReference type="InterPro" id="IPR001674">
    <property type="entry name" value="GMP_synth_C"/>
</dbReference>
<dbReference type="InterPro" id="IPR004739">
    <property type="entry name" value="GMP_synth_GATase"/>
</dbReference>
<dbReference type="InterPro" id="IPR022955">
    <property type="entry name" value="GMP_synthase"/>
</dbReference>
<dbReference type="InterPro" id="IPR025777">
    <property type="entry name" value="GMPS_ATP_PPase_dom"/>
</dbReference>
<dbReference type="InterPro" id="IPR022310">
    <property type="entry name" value="NAD/GMP_synthase"/>
</dbReference>
<dbReference type="InterPro" id="IPR014729">
    <property type="entry name" value="Rossmann-like_a/b/a_fold"/>
</dbReference>
<dbReference type="NCBIfam" id="TIGR00884">
    <property type="entry name" value="guaA_Cterm"/>
    <property type="match status" value="1"/>
</dbReference>
<dbReference type="NCBIfam" id="TIGR00888">
    <property type="entry name" value="guaA_Nterm"/>
    <property type="match status" value="1"/>
</dbReference>
<dbReference type="NCBIfam" id="NF000848">
    <property type="entry name" value="PRK00074.1"/>
    <property type="match status" value="1"/>
</dbReference>
<dbReference type="PANTHER" id="PTHR11922:SF2">
    <property type="entry name" value="GMP SYNTHASE [GLUTAMINE-HYDROLYZING]"/>
    <property type="match status" value="1"/>
</dbReference>
<dbReference type="PANTHER" id="PTHR11922">
    <property type="entry name" value="GMP SYNTHASE-RELATED"/>
    <property type="match status" value="1"/>
</dbReference>
<dbReference type="Pfam" id="PF00117">
    <property type="entry name" value="GATase"/>
    <property type="match status" value="1"/>
</dbReference>
<dbReference type="Pfam" id="PF00958">
    <property type="entry name" value="GMP_synt_C"/>
    <property type="match status" value="1"/>
</dbReference>
<dbReference type="Pfam" id="PF02540">
    <property type="entry name" value="NAD_synthase"/>
    <property type="match status" value="1"/>
</dbReference>
<dbReference type="PRINTS" id="PR00097">
    <property type="entry name" value="ANTSNTHASEII"/>
</dbReference>
<dbReference type="PRINTS" id="PR00099">
    <property type="entry name" value="CPSGATASE"/>
</dbReference>
<dbReference type="PRINTS" id="PR00096">
    <property type="entry name" value="GATASE"/>
</dbReference>
<dbReference type="SUPFAM" id="SSF52402">
    <property type="entry name" value="Adenine nucleotide alpha hydrolases-like"/>
    <property type="match status" value="1"/>
</dbReference>
<dbReference type="SUPFAM" id="SSF52317">
    <property type="entry name" value="Class I glutamine amidotransferase-like"/>
    <property type="match status" value="1"/>
</dbReference>
<dbReference type="SUPFAM" id="SSF54810">
    <property type="entry name" value="GMP synthetase C-terminal dimerisation domain"/>
    <property type="match status" value="1"/>
</dbReference>
<dbReference type="PROSITE" id="PS51273">
    <property type="entry name" value="GATASE_TYPE_1"/>
    <property type="match status" value="1"/>
</dbReference>
<dbReference type="PROSITE" id="PS51553">
    <property type="entry name" value="GMPS_ATP_PPASE"/>
    <property type="match status" value="1"/>
</dbReference>
<keyword id="KW-0067">ATP-binding</keyword>
<keyword id="KW-0315">Glutamine amidotransferase</keyword>
<keyword id="KW-0332">GMP biosynthesis</keyword>
<keyword id="KW-0436">Ligase</keyword>
<keyword id="KW-0547">Nucleotide-binding</keyword>
<keyword id="KW-0658">Purine biosynthesis</keyword>
<keyword id="KW-1185">Reference proteome</keyword>
<comment type="function">
    <text evidence="1">Catalyzes the synthesis of GMP from XMP.</text>
</comment>
<comment type="catalytic activity">
    <reaction evidence="1">
        <text>XMP + L-glutamine + ATP + H2O = GMP + L-glutamate + AMP + diphosphate + 2 H(+)</text>
        <dbReference type="Rhea" id="RHEA:11680"/>
        <dbReference type="ChEBI" id="CHEBI:15377"/>
        <dbReference type="ChEBI" id="CHEBI:15378"/>
        <dbReference type="ChEBI" id="CHEBI:29985"/>
        <dbReference type="ChEBI" id="CHEBI:30616"/>
        <dbReference type="ChEBI" id="CHEBI:33019"/>
        <dbReference type="ChEBI" id="CHEBI:57464"/>
        <dbReference type="ChEBI" id="CHEBI:58115"/>
        <dbReference type="ChEBI" id="CHEBI:58359"/>
        <dbReference type="ChEBI" id="CHEBI:456215"/>
        <dbReference type="EC" id="6.3.5.2"/>
    </reaction>
</comment>
<comment type="pathway">
    <text evidence="1">Purine metabolism; GMP biosynthesis; GMP from XMP (L-Gln route): step 1/1.</text>
</comment>
<comment type="subunit">
    <text evidence="1">Homodimer.</text>
</comment>
<proteinExistence type="inferred from homology"/>
<protein>
    <recommendedName>
        <fullName evidence="1">GMP synthase [glutamine-hydrolyzing]</fullName>
        <ecNumber evidence="1">6.3.5.2</ecNumber>
    </recommendedName>
    <alternativeName>
        <fullName evidence="1">GMP synthetase</fullName>
    </alternativeName>
    <alternativeName>
        <fullName evidence="1">Glutamine amidotransferase</fullName>
    </alternativeName>
</protein>
<organism>
    <name type="scientific">Escherichia coli O139:H28 (strain E24377A / ETEC)</name>
    <dbReference type="NCBI Taxonomy" id="331111"/>
    <lineage>
        <taxon>Bacteria</taxon>
        <taxon>Pseudomonadati</taxon>
        <taxon>Pseudomonadota</taxon>
        <taxon>Gammaproteobacteria</taxon>
        <taxon>Enterobacterales</taxon>
        <taxon>Enterobacteriaceae</taxon>
        <taxon>Escherichia</taxon>
    </lineage>
</organism>
<reference key="1">
    <citation type="journal article" date="2008" name="J. Bacteriol.">
        <title>The pangenome structure of Escherichia coli: comparative genomic analysis of E. coli commensal and pathogenic isolates.</title>
        <authorList>
            <person name="Rasko D.A."/>
            <person name="Rosovitz M.J."/>
            <person name="Myers G.S.A."/>
            <person name="Mongodin E.F."/>
            <person name="Fricke W.F."/>
            <person name="Gajer P."/>
            <person name="Crabtree J."/>
            <person name="Sebaihia M."/>
            <person name="Thomson N.R."/>
            <person name="Chaudhuri R."/>
            <person name="Henderson I.R."/>
            <person name="Sperandio V."/>
            <person name="Ravel J."/>
        </authorList>
    </citation>
    <scope>NUCLEOTIDE SEQUENCE [LARGE SCALE GENOMIC DNA]</scope>
    <source>
        <strain>E24377A / ETEC</strain>
    </source>
</reference>
<accession>A7ZPV1</accession>
<gene>
    <name evidence="1" type="primary">guaA</name>
    <name type="ordered locus">EcE24377A_2791</name>
</gene>
<feature type="chain" id="PRO_1000120278" description="GMP synthase [glutamine-hydrolyzing]">
    <location>
        <begin position="1"/>
        <end position="525"/>
    </location>
</feature>
<feature type="domain" description="Glutamine amidotransferase type-1" evidence="1">
    <location>
        <begin position="9"/>
        <end position="207"/>
    </location>
</feature>
<feature type="domain" description="GMPS ATP-PPase" evidence="1">
    <location>
        <begin position="208"/>
        <end position="400"/>
    </location>
</feature>
<feature type="active site" description="Nucleophile" evidence="1">
    <location>
        <position position="86"/>
    </location>
</feature>
<feature type="active site" evidence="1">
    <location>
        <position position="181"/>
    </location>
</feature>
<feature type="active site" evidence="1">
    <location>
        <position position="183"/>
    </location>
</feature>
<feature type="binding site" evidence="1">
    <location>
        <begin position="235"/>
        <end position="241"/>
    </location>
    <ligand>
        <name>ATP</name>
        <dbReference type="ChEBI" id="CHEBI:30616"/>
    </ligand>
</feature>
<evidence type="ECO:0000255" key="1">
    <source>
        <dbReference type="HAMAP-Rule" id="MF_00344"/>
    </source>
</evidence>
<name>GUAA_ECO24</name>